<dbReference type="EC" id="2.2.1.7" evidence="1"/>
<dbReference type="EMBL" id="CP000264">
    <property type="protein sequence ID" value="ABD53005.1"/>
    <property type="molecule type" value="Genomic_DNA"/>
</dbReference>
<dbReference type="RefSeq" id="WP_011453214.1">
    <property type="nucleotide sequence ID" value="NC_007802.1"/>
</dbReference>
<dbReference type="SMR" id="Q28WA7"/>
<dbReference type="STRING" id="290400.Jann_0088"/>
<dbReference type="KEGG" id="jan:Jann_0088"/>
<dbReference type="eggNOG" id="COG1154">
    <property type="taxonomic scope" value="Bacteria"/>
</dbReference>
<dbReference type="HOGENOM" id="CLU_009227_1_4_5"/>
<dbReference type="OrthoDB" id="9803371at2"/>
<dbReference type="UniPathway" id="UPA00064">
    <property type="reaction ID" value="UER00091"/>
</dbReference>
<dbReference type="Proteomes" id="UP000008326">
    <property type="component" value="Chromosome"/>
</dbReference>
<dbReference type="GO" id="GO:0008661">
    <property type="term" value="F:1-deoxy-D-xylulose-5-phosphate synthase activity"/>
    <property type="evidence" value="ECO:0007669"/>
    <property type="project" value="UniProtKB-UniRule"/>
</dbReference>
<dbReference type="GO" id="GO:0000287">
    <property type="term" value="F:magnesium ion binding"/>
    <property type="evidence" value="ECO:0007669"/>
    <property type="project" value="UniProtKB-UniRule"/>
</dbReference>
<dbReference type="GO" id="GO:0030976">
    <property type="term" value="F:thiamine pyrophosphate binding"/>
    <property type="evidence" value="ECO:0007669"/>
    <property type="project" value="UniProtKB-UniRule"/>
</dbReference>
<dbReference type="GO" id="GO:0052865">
    <property type="term" value="P:1-deoxy-D-xylulose 5-phosphate biosynthetic process"/>
    <property type="evidence" value="ECO:0007669"/>
    <property type="project" value="UniProtKB-UniPathway"/>
</dbReference>
<dbReference type="GO" id="GO:0016114">
    <property type="term" value="P:terpenoid biosynthetic process"/>
    <property type="evidence" value="ECO:0007669"/>
    <property type="project" value="UniProtKB-UniRule"/>
</dbReference>
<dbReference type="GO" id="GO:0009228">
    <property type="term" value="P:thiamine biosynthetic process"/>
    <property type="evidence" value="ECO:0007669"/>
    <property type="project" value="UniProtKB-UniRule"/>
</dbReference>
<dbReference type="CDD" id="cd02007">
    <property type="entry name" value="TPP_DXS"/>
    <property type="match status" value="1"/>
</dbReference>
<dbReference type="CDD" id="cd07033">
    <property type="entry name" value="TPP_PYR_DXS_TK_like"/>
    <property type="match status" value="1"/>
</dbReference>
<dbReference type="FunFam" id="3.40.50.920:FF:000002">
    <property type="entry name" value="1-deoxy-D-xylulose-5-phosphate synthase"/>
    <property type="match status" value="1"/>
</dbReference>
<dbReference type="FunFam" id="3.40.50.970:FF:000005">
    <property type="entry name" value="1-deoxy-D-xylulose-5-phosphate synthase"/>
    <property type="match status" value="1"/>
</dbReference>
<dbReference type="Gene3D" id="3.40.50.920">
    <property type="match status" value="1"/>
</dbReference>
<dbReference type="Gene3D" id="3.40.50.970">
    <property type="match status" value="2"/>
</dbReference>
<dbReference type="HAMAP" id="MF_00315">
    <property type="entry name" value="DXP_synth"/>
    <property type="match status" value="1"/>
</dbReference>
<dbReference type="InterPro" id="IPR005477">
    <property type="entry name" value="Dxylulose-5-P_synthase"/>
</dbReference>
<dbReference type="InterPro" id="IPR029061">
    <property type="entry name" value="THDP-binding"/>
</dbReference>
<dbReference type="InterPro" id="IPR009014">
    <property type="entry name" value="Transketo_C/PFOR_II"/>
</dbReference>
<dbReference type="InterPro" id="IPR005475">
    <property type="entry name" value="Transketolase-like_Pyr-bd"/>
</dbReference>
<dbReference type="InterPro" id="IPR033248">
    <property type="entry name" value="Transketolase_C"/>
</dbReference>
<dbReference type="NCBIfam" id="TIGR00204">
    <property type="entry name" value="dxs"/>
    <property type="match status" value="1"/>
</dbReference>
<dbReference type="NCBIfam" id="NF003933">
    <property type="entry name" value="PRK05444.2-2"/>
    <property type="match status" value="1"/>
</dbReference>
<dbReference type="PANTHER" id="PTHR43322">
    <property type="entry name" value="1-D-DEOXYXYLULOSE 5-PHOSPHATE SYNTHASE-RELATED"/>
    <property type="match status" value="1"/>
</dbReference>
<dbReference type="PANTHER" id="PTHR43322:SF5">
    <property type="entry name" value="1-DEOXY-D-XYLULOSE-5-PHOSPHATE SYNTHASE, CHLOROPLASTIC"/>
    <property type="match status" value="1"/>
</dbReference>
<dbReference type="Pfam" id="PF13292">
    <property type="entry name" value="DXP_synthase_N"/>
    <property type="match status" value="1"/>
</dbReference>
<dbReference type="Pfam" id="PF02779">
    <property type="entry name" value="Transket_pyr"/>
    <property type="match status" value="1"/>
</dbReference>
<dbReference type="Pfam" id="PF02780">
    <property type="entry name" value="Transketolase_C"/>
    <property type="match status" value="1"/>
</dbReference>
<dbReference type="SMART" id="SM00861">
    <property type="entry name" value="Transket_pyr"/>
    <property type="match status" value="1"/>
</dbReference>
<dbReference type="SUPFAM" id="SSF52518">
    <property type="entry name" value="Thiamin diphosphate-binding fold (THDP-binding)"/>
    <property type="match status" value="2"/>
</dbReference>
<dbReference type="SUPFAM" id="SSF52922">
    <property type="entry name" value="TK C-terminal domain-like"/>
    <property type="match status" value="1"/>
</dbReference>
<reference key="1">
    <citation type="submission" date="2006-02" db="EMBL/GenBank/DDBJ databases">
        <title>Complete sequence of chromosome of Jannaschia sp. CCS1.</title>
        <authorList>
            <consortium name="US DOE Joint Genome Institute"/>
            <person name="Copeland A."/>
            <person name="Lucas S."/>
            <person name="Lapidus A."/>
            <person name="Barry K."/>
            <person name="Detter J.C."/>
            <person name="Glavina del Rio T."/>
            <person name="Hammon N."/>
            <person name="Israni S."/>
            <person name="Pitluck S."/>
            <person name="Brettin T."/>
            <person name="Bruce D."/>
            <person name="Han C."/>
            <person name="Tapia R."/>
            <person name="Gilna P."/>
            <person name="Chertkov O."/>
            <person name="Saunders E."/>
            <person name="Schmutz J."/>
            <person name="Larimer F."/>
            <person name="Land M."/>
            <person name="Kyrpides N."/>
            <person name="Lykidis A."/>
            <person name="Moran M.A."/>
            <person name="Belas R."/>
            <person name="Ye W."/>
            <person name="Buchan A."/>
            <person name="Gonzalez J.M."/>
            <person name="Schell M.A."/>
            <person name="Richardson P."/>
        </authorList>
    </citation>
    <scope>NUCLEOTIDE SEQUENCE [LARGE SCALE GENOMIC DNA]</scope>
    <source>
        <strain>CCS1</strain>
    </source>
</reference>
<keyword id="KW-0414">Isoprene biosynthesis</keyword>
<keyword id="KW-0460">Magnesium</keyword>
<keyword id="KW-0479">Metal-binding</keyword>
<keyword id="KW-1185">Reference proteome</keyword>
<keyword id="KW-0784">Thiamine biosynthesis</keyword>
<keyword id="KW-0786">Thiamine pyrophosphate</keyword>
<keyword id="KW-0808">Transferase</keyword>
<evidence type="ECO:0000255" key="1">
    <source>
        <dbReference type="HAMAP-Rule" id="MF_00315"/>
    </source>
</evidence>
<sequence>MSDRPSTPLLDNVQSPNDLKGLSDFDLKRLADELRAEMIWTVSKTGGHFGAGLGVVELTVALHSVFDTPRDKLVWDVSHQCYPHKILTGRRDQMLTIRQKDGLSGFTKRSESPFDPFGAAHSSTSISAALGFAVARDLGGDSDTGHGDAIAVIGDGAMSGGMAFEAMNNAGHLGKRLIVILNDNEMSIAPPTGALSSYLSRLYAGAPFQEFKAAAKGAVSLLPEPFQEGARRAKELLKSATVGGTLFEELGFSYVGPIDGHDMESLLSVLRTVKARADGPILIHAITKKGKGYSEHRADRGHATAKFNIATGEQVKAPSNAPSYTKVFAQSLIAEAEDDPKVVAVTAAMPDGTGLDLFAERFPSRCFDVGIAEQHGVTFAAGMAAGGLKPFAAIYSTFLQRGYDQVVHDVAIQRLPVRFAIDRAGLVGADGCTHAGSYDISYLANLPGFVVMAAADEAELRHMVRTALEIDDRPSAFRFPRGEGMGVDMPDRGTALEIGKGRMISEGNRVAILNFGTRLKEVQEAAETLSQRGITPTIADARFAKPLDEALILQLARHHEALITVEEGAVGGFGSHVAHLLAENAVFDTGIKYRSMVLPDIFIDQASPKDMYAVAGMNAEDIVAKVLTTLGVEVLSQRA</sequence>
<protein>
    <recommendedName>
        <fullName evidence="1">1-deoxy-D-xylulose-5-phosphate synthase 1</fullName>
        <ecNumber evidence="1">2.2.1.7</ecNumber>
    </recommendedName>
    <alternativeName>
        <fullName evidence="1">1-deoxyxylulose-5-phosphate synthase 1</fullName>
        <shortName evidence="1">DXP synthase 1</shortName>
        <shortName evidence="1">DXPS 1</shortName>
    </alternativeName>
</protein>
<comment type="function">
    <text evidence="1">Catalyzes the acyloin condensation reaction between C atoms 2 and 3 of pyruvate and glyceraldehyde 3-phosphate to yield 1-deoxy-D-xylulose-5-phosphate (DXP).</text>
</comment>
<comment type="catalytic activity">
    <reaction evidence="1">
        <text>D-glyceraldehyde 3-phosphate + pyruvate + H(+) = 1-deoxy-D-xylulose 5-phosphate + CO2</text>
        <dbReference type="Rhea" id="RHEA:12605"/>
        <dbReference type="ChEBI" id="CHEBI:15361"/>
        <dbReference type="ChEBI" id="CHEBI:15378"/>
        <dbReference type="ChEBI" id="CHEBI:16526"/>
        <dbReference type="ChEBI" id="CHEBI:57792"/>
        <dbReference type="ChEBI" id="CHEBI:59776"/>
        <dbReference type="EC" id="2.2.1.7"/>
    </reaction>
</comment>
<comment type="cofactor">
    <cofactor evidence="1">
        <name>Mg(2+)</name>
        <dbReference type="ChEBI" id="CHEBI:18420"/>
    </cofactor>
    <text evidence="1">Binds 1 Mg(2+) ion per subunit.</text>
</comment>
<comment type="cofactor">
    <cofactor evidence="1">
        <name>thiamine diphosphate</name>
        <dbReference type="ChEBI" id="CHEBI:58937"/>
    </cofactor>
    <text evidence="1">Binds 1 thiamine pyrophosphate per subunit.</text>
</comment>
<comment type="pathway">
    <text evidence="1">Metabolic intermediate biosynthesis; 1-deoxy-D-xylulose 5-phosphate biosynthesis; 1-deoxy-D-xylulose 5-phosphate from D-glyceraldehyde 3-phosphate and pyruvate: step 1/1.</text>
</comment>
<comment type="subunit">
    <text evidence="1">Homodimer.</text>
</comment>
<comment type="similarity">
    <text evidence="1">Belongs to the transketolase family. DXPS subfamily.</text>
</comment>
<proteinExistence type="inferred from homology"/>
<gene>
    <name evidence="1" type="primary">dxs1</name>
    <name type="ordered locus">Jann_0088</name>
</gene>
<feature type="chain" id="PRO_0000256431" description="1-deoxy-D-xylulose-5-phosphate synthase 1">
    <location>
        <begin position="1"/>
        <end position="639"/>
    </location>
</feature>
<feature type="binding site" evidence="1">
    <location>
        <position position="79"/>
    </location>
    <ligand>
        <name>thiamine diphosphate</name>
        <dbReference type="ChEBI" id="CHEBI:58937"/>
    </ligand>
</feature>
<feature type="binding site" evidence="1">
    <location>
        <begin position="120"/>
        <end position="122"/>
    </location>
    <ligand>
        <name>thiamine diphosphate</name>
        <dbReference type="ChEBI" id="CHEBI:58937"/>
    </ligand>
</feature>
<feature type="binding site" evidence="1">
    <location>
        <position position="155"/>
    </location>
    <ligand>
        <name>Mg(2+)</name>
        <dbReference type="ChEBI" id="CHEBI:18420"/>
    </ligand>
</feature>
<feature type="binding site" evidence="1">
    <location>
        <begin position="156"/>
        <end position="157"/>
    </location>
    <ligand>
        <name>thiamine diphosphate</name>
        <dbReference type="ChEBI" id="CHEBI:58937"/>
    </ligand>
</feature>
<feature type="binding site" evidence="1">
    <location>
        <position position="184"/>
    </location>
    <ligand>
        <name>Mg(2+)</name>
        <dbReference type="ChEBI" id="CHEBI:18420"/>
    </ligand>
</feature>
<feature type="binding site" evidence="1">
    <location>
        <position position="184"/>
    </location>
    <ligand>
        <name>thiamine diphosphate</name>
        <dbReference type="ChEBI" id="CHEBI:58937"/>
    </ligand>
</feature>
<feature type="binding site" evidence="1">
    <location>
        <position position="293"/>
    </location>
    <ligand>
        <name>thiamine diphosphate</name>
        <dbReference type="ChEBI" id="CHEBI:58937"/>
    </ligand>
</feature>
<feature type="binding site" evidence="1">
    <location>
        <position position="373"/>
    </location>
    <ligand>
        <name>thiamine diphosphate</name>
        <dbReference type="ChEBI" id="CHEBI:58937"/>
    </ligand>
</feature>
<accession>Q28WA7</accession>
<name>DXS1_JANSC</name>
<organism>
    <name type="scientific">Jannaschia sp. (strain CCS1)</name>
    <dbReference type="NCBI Taxonomy" id="290400"/>
    <lineage>
        <taxon>Bacteria</taxon>
        <taxon>Pseudomonadati</taxon>
        <taxon>Pseudomonadota</taxon>
        <taxon>Alphaproteobacteria</taxon>
        <taxon>Rhodobacterales</taxon>
        <taxon>Roseobacteraceae</taxon>
        <taxon>Jannaschia</taxon>
    </lineage>
</organism>